<evidence type="ECO:0000255" key="1">
    <source>
        <dbReference type="HAMAP-Rule" id="MF_00451"/>
    </source>
</evidence>
<sequence>MAIERTLSIIKPDAVAKNVIGQIYARFEAAGLKIVAAKMVHLSRGEAEQFYAVHKERPFFKDLVDFMVSGPVMIQALEGENAIAKNRDLMGATDPKKAEKGTIRADFADSIDANAVHGSDAAETAAVEVSFFFPGMNVYSR</sequence>
<organism>
    <name type="scientific">Cupriavidus necator (strain ATCC 17699 / DSM 428 / KCTC 22496 / NCIMB 10442 / H16 / Stanier 337)</name>
    <name type="common">Ralstonia eutropha</name>
    <dbReference type="NCBI Taxonomy" id="381666"/>
    <lineage>
        <taxon>Bacteria</taxon>
        <taxon>Pseudomonadati</taxon>
        <taxon>Pseudomonadota</taxon>
        <taxon>Betaproteobacteria</taxon>
        <taxon>Burkholderiales</taxon>
        <taxon>Burkholderiaceae</taxon>
        <taxon>Cupriavidus</taxon>
    </lineage>
</organism>
<comment type="function">
    <text evidence="1">Major role in the synthesis of nucleoside triphosphates other than ATP. The ATP gamma phosphate is transferred to the NDP beta phosphate via a ping-pong mechanism, using a phosphorylated active-site intermediate.</text>
</comment>
<comment type="catalytic activity">
    <reaction evidence="1">
        <text>a 2'-deoxyribonucleoside 5'-diphosphate + ATP = a 2'-deoxyribonucleoside 5'-triphosphate + ADP</text>
        <dbReference type="Rhea" id="RHEA:44640"/>
        <dbReference type="ChEBI" id="CHEBI:30616"/>
        <dbReference type="ChEBI" id="CHEBI:61560"/>
        <dbReference type="ChEBI" id="CHEBI:73316"/>
        <dbReference type="ChEBI" id="CHEBI:456216"/>
        <dbReference type="EC" id="2.7.4.6"/>
    </reaction>
</comment>
<comment type="catalytic activity">
    <reaction evidence="1">
        <text>a ribonucleoside 5'-diphosphate + ATP = a ribonucleoside 5'-triphosphate + ADP</text>
        <dbReference type="Rhea" id="RHEA:18113"/>
        <dbReference type="ChEBI" id="CHEBI:30616"/>
        <dbReference type="ChEBI" id="CHEBI:57930"/>
        <dbReference type="ChEBI" id="CHEBI:61557"/>
        <dbReference type="ChEBI" id="CHEBI:456216"/>
        <dbReference type="EC" id="2.7.4.6"/>
    </reaction>
</comment>
<comment type="cofactor">
    <cofactor evidence="1">
        <name>Mg(2+)</name>
        <dbReference type="ChEBI" id="CHEBI:18420"/>
    </cofactor>
</comment>
<comment type="subunit">
    <text evidence="1">Homotetramer.</text>
</comment>
<comment type="subcellular location">
    <subcellularLocation>
        <location evidence="1">Cytoplasm</location>
    </subcellularLocation>
</comment>
<comment type="similarity">
    <text evidence="1">Belongs to the NDK family.</text>
</comment>
<feature type="chain" id="PRO_1000026281" description="Nucleoside diphosphate kinase">
    <location>
        <begin position="1"/>
        <end position="141"/>
    </location>
</feature>
<feature type="active site" description="Pros-phosphohistidine intermediate" evidence="1">
    <location>
        <position position="117"/>
    </location>
</feature>
<feature type="binding site" evidence="1">
    <location>
        <position position="11"/>
    </location>
    <ligand>
        <name>ATP</name>
        <dbReference type="ChEBI" id="CHEBI:30616"/>
    </ligand>
</feature>
<feature type="binding site" evidence="1">
    <location>
        <position position="59"/>
    </location>
    <ligand>
        <name>ATP</name>
        <dbReference type="ChEBI" id="CHEBI:30616"/>
    </ligand>
</feature>
<feature type="binding site" evidence="1">
    <location>
        <position position="87"/>
    </location>
    <ligand>
        <name>ATP</name>
        <dbReference type="ChEBI" id="CHEBI:30616"/>
    </ligand>
</feature>
<feature type="binding site" evidence="1">
    <location>
        <position position="93"/>
    </location>
    <ligand>
        <name>ATP</name>
        <dbReference type="ChEBI" id="CHEBI:30616"/>
    </ligand>
</feature>
<feature type="binding site" evidence="1">
    <location>
        <position position="104"/>
    </location>
    <ligand>
        <name>ATP</name>
        <dbReference type="ChEBI" id="CHEBI:30616"/>
    </ligand>
</feature>
<feature type="binding site" evidence="1">
    <location>
        <position position="114"/>
    </location>
    <ligand>
        <name>ATP</name>
        <dbReference type="ChEBI" id="CHEBI:30616"/>
    </ligand>
</feature>
<name>NDK_CUPNH</name>
<reference key="1">
    <citation type="journal article" date="2006" name="Nat. Biotechnol.">
        <title>Genome sequence of the bioplastic-producing 'Knallgas' bacterium Ralstonia eutropha H16.</title>
        <authorList>
            <person name="Pohlmann A."/>
            <person name="Fricke W.F."/>
            <person name="Reinecke F."/>
            <person name="Kusian B."/>
            <person name="Liesegang H."/>
            <person name="Cramm R."/>
            <person name="Eitinger T."/>
            <person name="Ewering C."/>
            <person name="Poetter M."/>
            <person name="Schwartz E."/>
            <person name="Strittmatter A."/>
            <person name="Voss I."/>
            <person name="Gottschalk G."/>
            <person name="Steinbuechel A."/>
            <person name="Friedrich B."/>
            <person name="Bowien B."/>
        </authorList>
    </citation>
    <scope>NUCLEOTIDE SEQUENCE [LARGE SCALE GENOMIC DNA]</scope>
    <source>
        <strain>ATCC 17699 / DSM 428 / KCTC 22496 / NCIMB 10442 / H16 / Stanier 337</strain>
    </source>
</reference>
<gene>
    <name evidence="1" type="primary">ndk</name>
    <name type="ordered locus">H16_A2368</name>
</gene>
<proteinExistence type="inferred from homology"/>
<dbReference type="EC" id="2.7.4.6" evidence="1"/>
<dbReference type="EMBL" id="AM260479">
    <property type="protein sequence ID" value="CAJ93463.1"/>
    <property type="molecule type" value="Genomic_DNA"/>
</dbReference>
<dbReference type="RefSeq" id="WP_010809422.1">
    <property type="nucleotide sequence ID" value="NZ_CP039287.1"/>
</dbReference>
<dbReference type="SMR" id="Q0K958"/>
<dbReference type="STRING" id="381666.H16_A2368"/>
<dbReference type="KEGG" id="reh:H16_A2368"/>
<dbReference type="eggNOG" id="COG0105">
    <property type="taxonomic scope" value="Bacteria"/>
</dbReference>
<dbReference type="HOGENOM" id="CLU_060216_8_1_4"/>
<dbReference type="OrthoDB" id="9801161at2"/>
<dbReference type="Proteomes" id="UP000008210">
    <property type="component" value="Chromosome 1"/>
</dbReference>
<dbReference type="GO" id="GO:0005737">
    <property type="term" value="C:cytoplasm"/>
    <property type="evidence" value="ECO:0007669"/>
    <property type="project" value="UniProtKB-SubCell"/>
</dbReference>
<dbReference type="GO" id="GO:0005524">
    <property type="term" value="F:ATP binding"/>
    <property type="evidence" value="ECO:0007669"/>
    <property type="project" value="UniProtKB-UniRule"/>
</dbReference>
<dbReference type="GO" id="GO:0046872">
    <property type="term" value="F:metal ion binding"/>
    <property type="evidence" value="ECO:0007669"/>
    <property type="project" value="UniProtKB-KW"/>
</dbReference>
<dbReference type="GO" id="GO:0004550">
    <property type="term" value="F:nucleoside diphosphate kinase activity"/>
    <property type="evidence" value="ECO:0007669"/>
    <property type="project" value="UniProtKB-UniRule"/>
</dbReference>
<dbReference type="GO" id="GO:0006241">
    <property type="term" value="P:CTP biosynthetic process"/>
    <property type="evidence" value="ECO:0007669"/>
    <property type="project" value="UniProtKB-UniRule"/>
</dbReference>
<dbReference type="GO" id="GO:0006183">
    <property type="term" value="P:GTP biosynthetic process"/>
    <property type="evidence" value="ECO:0007669"/>
    <property type="project" value="UniProtKB-UniRule"/>
</dbReference>
<dbReference type="GO" id="GO:0006228">
    <property type="term" value="P:UTP biosynthetic process"/>
    <property type="evidence" value="ECO:0007669"/>
    <property type="project" value="UniProtKB-UniRule"/>
</dbReference>
<dbReference type="CDD" id="cd04413">
    <property type="entry name" value="NDPk_I"/>
    <property type="match status" value="1"/>
</dbReference>
<dbReference type="FunFam" id="3.30.70.141:FF:000001">
    <property type="entry name" value="Nucleoside diphosphate kinase"/>
    <property type="match status" value="1"/>
</dbReference>
<dbReference type="Gene3D" id="3.30.70.141">
    <property type="entry name" value="Nucleoside diphosphate kinase-like domain"/>
    <property type="match status" value="1"/>
</dbReference>
<dbReference type="HAMAP" id="MF_00451">
    <property type="entry name" value="NDP_kinase"/>
    <property type="match status" value="1"/>
</dbReference>
<dbReference type="InterPro" id="IPR034907">
    <property type="entry name" value="NDK-like_dom"/>
</dbReference>
<dbReference type="InterPro" id="IPR036850">
    <property type="entry name" value="NDK-like_dom_sf"/>
</dbReference>
<dbReference type="InterPro" id="IPR001564">
    <property type="entry name" value="Nucleoside_diP_kinase"/>
</dbReference>
<dbReference type="NCBIfam" id="NF001908">
    <property type="entry name" value="PRK00668.1"/>
    <property type="match status" value="1"/>
</dbReference>
<dbReference type="PANTHER" id="PTHR46161">
    <property type="entry name" value="NUCLEOSIDE DIPHOSPHATE KINASE"/>
    <property type="match status" value="1"/>
</dbReference>
<dbReference type="PANTHER" id="PTHR46161:SF3">
    <property type="entry name" value="NUCLEOSIDE DIPHOSPHATE KINASE DDB_G0292928-RELATED"/>
    <property type="match status" value="1"/>
</dbReference>
<dbReference type="Pfam" id="PF00334">
    <property type="entry name" value="NDK"/>
    <property type="match status" value="1"/>
</dbReference>
<dbReference type="PRINTS" id="PR01243">
    <property type="entry name" value="NUCDPKINASE"/>
</dbReference>
<dbReference type="SMART" id="SM00562">
    <property type="entry name" value="NDK"/>
    <property type="match status" value="1"/>
</dbReference>
<dbReference type="SUPFAM" id="SSF54919">
    <property type="entry name" value="Nucleoside diphosphate kinase, NDK"/>
    <property type="match status" value="1"/>
</dbReference>
<dbReference type="PROSITE" id="PS51374">
    <property type="entry name" value="NDPK_LIKE"/>
    <property type="match status" value="1"/>
</dbReference>
<protein>
    <recommendedName>
        <fullName evidence="1">Nucleoside diphosphate kinase</fullName>
        <shortName evidence="1">NDK</shortName>
        <shortName evidence="1">NDP kinase</shortName>
        <ecNumber evidence="1">2.7.4.6</ecNumber>
    </recommendedName>
    <alternativeName>
        <fullName evidence="1">Nucleoside-2-P kinase</fullName>
    </alternativeName>
</protein>
<accession>Q0K958</accession>
<keyword id="KW-0067">ATP-binding</keyword>
<keyword id="KW-0963">Cytoplasm</keyword>
<keyword id="KW-0418">Kinase</keyword>
<keyword id="KW-0460">Magnesium</keyword>
<keyword id="KW-0479">Metal-binding</keyword>
<keyword id="KW-0546">Nucleotide metabolism</keyword>
<keyword id="KW-0547">Nucleotide-binding</keyword>
<keyword id="KW-0597">Phosphoprotein</keyword>
<keyword id="KW-1185">Reference proteome</keyword>
<keyword id="KW-0808">Transferase</keyword>